<dbReference type="EC" id="6.3.5.2" evidence="1"/>
<dbReference type="EMBL" id="AE017282">
    <property type="protein sequence ID" value="AAU90479.1"/>
    <property type="molecule type" value="Genomic_DNA"/>
</dbReference>
<dbReference type="RefSeq" id="WP_010959654.1">
    <property type="nucleotide sequence ID" value="NC_002977.6"/>
</dbReference>
<dbReference type="SMR" id="Q60C21"/>
<dbReference type="STRING" id="243233.MCA0290"/>
<dbReference type="MEROPS" id="C26.957"/>
<dbReference type="GeneID" id="88222631"/>
<dbReference type="KEGG" id="mca:MCA0290"/>
<dbReference type="eggNOG" id="COG0518">
    <property type="taxonomic scope" value="Bacteria"/>
</dbReference>
<dbReference type="eggNOG" id="COG0519">
    <property type="taxonomic scope" value="Bacteria"/>
</dbReference>
<dbReference type="HOGENOM" id="CLU_014340_0_5_6"/>
<dbReference type="UniPathway" id="UPA00189">
    <property type="reaction ID" value="UER00296"/>
</dbReference>
<dbReference type="Proteomes" id="UP000006821">
    <property type="component" value="Chromosome"/>
</dbReference>
<dbReference type="GO" id="GO:0005829">
    <property type="term" value="C:cytosol"/>
    <property type="evidence" value="ECO:0007669"/>
    <property type="project" value="TreeGrafter"/>
</dbReference>
<dbReference type="GO" id="GO:0005524">
    <property type="term" value="F:ATP binding"/>
    <property type="evidence" value="ECO:0007669"/>
    <property type="project" value="UniProtKB-UniRule"/>
</dbReference>
<dbReference type="GO" id="GO:0003921">
    <property type="term" value="F:GMP synthase activity"/>
    <property type="evidence" value="ECO:0007669"/>
    <property type="project" value="InterPro"/>
</dbReference>
<dbReference type="CDD" id="cd01742">
    <property type="entry name" value="GATase1_GMP_Synthase"/>
    <property type="match status" value="1"/>
</dbReference>
<dbReference type="CDD" id="cd01997">
    <property type="entry name" value="GMP_synthase_C"/>
    <property type="match status" value="1"/>
</dbReference>
<dbReference type="FunFam" id="3.30.300.10:FF:000002">
    <property type="entry name" value="GMP synthase [glutamine-hydrolyzing]"/>
    <property type="match status" value="1"/>
</dbReference>
<dbReference type="FunFam" id="3.40.50.620:FF:000001">
    <property type="entry name" value="GMP synthase [glutamine-hydrolyzing]"/>
    <property type="match status" value="1"/>
</dbReference>
<dbReference type="FunFam" id="3.40.50.880:FF:000001">
    <property type="entry name" value="GMP synthase [glutamine-hydrolyzing]"/>
    <property type="match status" value="1"/>
</dbReference>
<dbReference type="Gene3D" id="3.30.300.10">
    <property type="match status" value="1"/>
</dbReference>
<dbReference type="Gene3D" id="3.40.50.880">
    <property type="match status" value="1"/>
</dbReference>
<dbReference type="Gene3D" id="3.40.50.620">
    <property type="entry name" value="HUPs"/>
    <property type="match status" value="1"/>
</dbReference>
<dbReference type="HAMAP" id="MF_00344">
    <property type="entry name" value="GMP_synthase"/>
    <property type="match status" value="1"/>
</dbReference>
<dbReference type="InterPro" id="IPR029062">
    <property type="entry name" value="Class_I_gatase-like"/>
</dbReference>
<dbReference type="InterPro" id="IPR017926">
    <property type="entry name" value="GATASE"/>
</dbReference>
<dbReference type="InterPro" id="IPR001674">
    <property type="entry name" value="GMP_synth_C"/>
</dbReference>
<dbReference type="InterPro" id="IPR004739">
    <property type="entry name" value="GMP_synth_GATase"/>
</dbReference>
<dbReference type="InterPro" id="IPR022955">
    <property type="entry name" value="GMP_synthase"/>
</dbReference>
<dbReference type="InterPro" id="IPR025777">
    <property type="entry name" value="GMPS_ATP_PPase_dom"/>
</dbReference>
<dbReference type="InterPro" id="IPR022310">
    <property type="entry name" value="NAD/GMP_synthase"/>
</dbReference>
<dbReference type="InterPro" id="IPR014729">
    <property type="entry name" value="Rossmann-like_a/b/a_fold"/>
</dbReference>
<dbReference type="NCBIfam" id="TIGR00884">
    <property type="entry name" value="guaA_Cterm"/>
    <property type="match status" value="1"/>
</dbReference>
<dbReference type="NCBIfam" id="TIGR00888">
    <property type="entry name" value="guaA_Nterm"/>
    <property type="match status" value="1"/>
</dbReference>
<dbReference type="NCBIfam" id="NF000848">
    <property type="entry name" value="PRK00074.1"/>
    <property type="match status" value="1"/>
</dbReference>
<dbReference type="PANTHER" id="PTHR11922:SF2">
    <property type="entry name" value="GMP SYNTHASE [GLUTAMINE-HYDROLYZING]"/>
    <property type="match status" value="1"/>
</dbReference>
<dbReference type="PANTHER" id="PTHR11922">
    <property type="entry name" value="GMP SYNTHASE-RELATED"/>
    <property type="match status" value="1"/>
</dbReference>
<dbReference type="Pfam" id="PF00117">
    <property type="entry name" value="GATase"/>
    <property type="match status" value="1"/>
</dbReference>
<dbReference type="Pfam" id="PF00958">
    <property type="entry name" value="GMP_synt_C"/>
    <property type="match status" value="1"/>
</dbReference>
<dbReference type="Pfam" id="PF02540">
    <property type="entry name" value="NAD_synthase"/>
    <property type="match status" value="1"/>
</dbReference>
<dbReference type="PRINTS" id="PR00097">
    <property type="entry name" value="ANTSNTHASEII"/>
</dbReference>
<dbReference type="PRINTS" id="PR00099">
    <property type="entry name" value="CPSGATASE"/>
</dbReference>
<dbReference type="PRINTS" id="PR00096">
    <property type="entry name" value="GATASE"/>
</dbReference>
<dbReference type="SUPFAM" id="SSF52402">
    <property type="entry name" value="Adenine nucleotide alpha hydrolases-like"/>
    <property type="match status" value="1"/>
</dbReference>
<dbReference type="SUPFAM" id="SSF52317">
    <property type="entry name" value="Class I glutamine amidotransferase-like"/>
    <property type="match status" value="1"/>
</dbReference>
<dbReference type="SUPFAM" id="SSF54810">
    <property type="entry name" value="GMP synthetase C-terminal dimerisation domain"/>
    <property type="match status" value="1"/>
</dbReference>
<dbReference type="PROSITE" id="PS51273">
    <property type="entry name" value="GATASE_TYPE_1"/>
    <property type="match status" value="1"/>
</dbReference>
<dbReference type="PROSITE" id="PS51553">
    <property type="entry name" value="GMPS_ATP_PPASE"/>
    <property type="match status" value="1"/>
</dbReference>
<sequence length="524" mass="58316">MTDIHAQKILILDFGSQYTQLIARRVRELGVYSEIHPYDCGDDFITEFAPQGIILSGGPESVTGTGTPRAPASVFTLGVPVLGICYGMQTMAAQLGGKVEAVEHREFGYAQVRAHGHSQLLNGIEDHTTPEGHGLLDVWMSHGDQVVGLPPGFKLIASTESAPIAGMADEERRFYALQFHPEVTHTRQGKRILERFVRKLCQCEARWTTGNIVEDAITRVRNRIGAERVVLGLSGGVDSSVVAALLQHAIGEQLTCVFVDTGLLRLNEGDQVMATFAEHMGVRVIRVNAEERFLQALQGIADPEDKRKIIGRLFVEIFDEEAAKIEDARWLAQGTIYPDVIESAGSKTGKAHVIKSHHNVGGLPETMKLQLVEPLRELFKDEVRQIGLELGLPYEMVYRHPFPGPGLGVRILGEVRKEYADLLRRADAIFIEELYRHDLYDKVSQAFAVFLPVKSVGVMGDGRRYDYVVALRAVETIDFMTARWAHLPYDFLDLVSRRIINEIPGISRVTYDISGKPPATIEWE</sequence>
<organism>
    <name type="scientific">Methylococcus capsulatus (strain ATCC 33009 / NCIMB 11132 / Bath)</name>
    <dbReference type="NCBI Taxonomy" id="243233"/>
    <lineage>
        <taxon>Bacteria</taxon>
        <taxon>Pseudomonadati</taxon>
        <taxon>Pseudomonadota</taxon>
        <taxon>Gammaproteobacteria</taxon>
        <taxon>Methylococcales</taxon>
        <taxon>Methylococcaceae</taxon>
        <taxon>Methylococcus</taxon>
    </lineage>
</organism>
<evidence type="ECO:0000255" key="1">
    <source>
        <dbReference type="HAMAP-Rule" id="MF_00344"/>
    </source>
</evidence>
<gene>
    <name evidence="1" type="primary">guaA</name>
    <name type="ordered locus">MCA0290</name>
</gene>
<feature type="chain" id="PRO_0000229443" description="GMP synthase [glutamine-hydrolyzing]">
    <location>
        <begin position="1"/>
        <end position="524"/>
    </location>
</feature>
<feature type="domain" description="Glutamine amidotransferase type-1" evidence="1">
    <location>
        <begin position="8"/>
        <end position="206"/>
    </location>
</feature>
<feature type="domain" description="GMPS ATP-PPase" evidence="1">
    <location>
        <begin position="207"/>
        <end position="399"/>
    </location>
</feature>
<feature type="active site" description="Nucleophile" evidence="1">
    <location>
        <position position="85"/>
    </location>
</feature>
<feature type="active site" evidence="1">
    <location>
        <position position="180"/>
    </location>
</feature>
<feature type="active site" evidence="1">
    <location>
        <position position="182"/>
    </location>
</feature>
<feature type="binding site" evidence="1">
    <location>
        <begin position="234"/>
        <end position="240"/>
    </location>
    <ligand>
        <name>ATP</name>
        <dbReference type="ChEBI" id="CHEBI:30616"/>
    </ligand>
</feature>
<reference key="1">
    <citation type="journal article" date="2004" name="PLoS Biol.">
        <title>Genomic insights into methanotrophy: the complete genome sequence of Methylococcus capsulatus (Bath).</title>
        <authorList>
            <person name="Ward N.L."/>
            <person name="Larsen O."/>
            <person name="Sakwa J."/>
            <person name="Bruseth L."/>
            <person name="Khouri H.M."/>
            <person name="Durkin A.S."/>
            <person name="Dimitrov G."/>
            <person name="Jiang L."/>
            <person name="Scanlan D."/>
            <person name="Kang K.H."/>
            <person name="Lewis M.R."/>
            <person name="Nelson K.E."/>
            <person name="Methe B.A."/>
            <person name="Wu M."/>
            <person name="Heidelberg J.F."/>
            <person name="Paulsen I.T."/>
            <person name="Fouts D.E."/>
            <person name="Ravel J."/>
            <person name="Tettelin H."/>
            <person name="Ren Q."/>
            <person name="Read T.D."/>
            <person name="DeBoy R.T."/>
            <person name="Seshadri R."/>
            <person name="Salzberg S.L."/>
            <person name="Jensen H.B."/>
            <person name="Birkeland N.K."/>
            <person name="Nelson W.C."/>
            <person name="Dodson R.J."/>
            <person name="Grindhaug S.H."/>
            <person name="Holt I.E."/>
            <person name="Eidhammer I."/>
            <person name="Jonasen I."/>
            <person name="Vanaken S."/>
            <person name="Utterback T.R."/>
            <person name="Feldblyum T.V."/>
            <person name="Fraser C.M."/>
            <person name="Lillehaug J.R."/>
            <person name="Eisen J.A."/>
        </authorList>
    </citation>
    <scope>NUCLEOTIDE SEQUENCE [LARGE SCALE GENOMIC DNA]</scope>
    <source>
        <strain>ATCC 33009 / NCIMB 11132 / Bath</strain>
    </source>
</reference>
<keyword id="KW-0067">ATP-binding</keyword>
<keyword id="KW-0315">Glutamine amidotransferase</keyword>
<keyword id="KW-0332">GMP biosynthesis</keyword>
<keyword id="KW-0436">Ligase</keyword>
<keyword id="KW-0547">Nucleotide-binding</keyword>
<keyword id="KW-0658">Purine biosynthesis</keyword>
<keyword id="KW-1185">Reference proteome</keyword>
<name>GUAA_METCA</name>
<comment type="function">
    <text evidence="1">Catalyzes the synthesis of GMP from XMP.</text>
</comment>
<comment type="catalytic activity">
    <reaction evidence="1">
        <text>XMP + L-glutamine + ATP + H2O = GMP + L-glutamate + AMP + diphosphate + 2 H(+)</text>
        <dbReference type="Rhea" id="RHEA:11680"/>
        <dbReference type="ChEBI" id="CHEBI:15377"/>
        <dbReference type="ChEBI" id="CHEBI:15378"/>
        <dbReference type="ChEBI" id="CHEBI:29985"/>
        <dbReference type="ChEBI" id="CHEBI:30616"/>
        <dbReference type="ChEBI" id="CHEBI:33019"/>
        <dbReference type="ChEBI" id="CHEBI:57464"/>
        <dbReference type="ChEBI" id="CHEBI:58115"/>
        <dbReference type="ChEBI" id="CHEBI:58359"/>
        <dbReference type="ChEBI" id="CHEBI:456215"/>
        <dbReference type="EC" id="6.3.5.2"/>
    </reaction>
</comment>
<comment type="pathway">
    <text evidence="1">Purine metabolism; GMP biosynthesis; GMP from XMP (L-Gln route): step 1/1.</text>
</comment>
<comment type="subunit">
    <text evidence="1">Homodimer.</text>
</comment>
<proteinExistence type="inferred from homology"/>
<protein>
    <recommendedName>
        <fullName evidence="1">GMP synthase [glutamine-hydrolyzing]</fullName>
        <ecNumber evidence="1">6.3.5.2</ecNumber>
    </recommendedName>
    <alternativeName>
        <fullName evidence="1">GMP synthetase</fullName>
    </alternativeName>
    <alternativeName>
        <fullName evidence="1">Glutamine amidotransferase</fullName>
    </alternativeName>
</protein>
<accession>Q60C21</accession>